<dbReference type="EC" id="2.6.1.87" evidence="1"/>
<dbReference type="EMBL" id="CP000946">
    <property type="protein sequence ID" value="ACA77060.1"/>
    <property type="molecule type" value="Genomic_DNA"/>
</dbReference>
<dbReference type="RefSeq" id="WP_001300684.1">
    <property type="nucleotide sequence ID" value="NZ_MTFT01000028.1"/>
</dbReference>
<dbReference type="SMR" id="B1IXT4"/>
<dbReference type="KEGG" id="ecl:EcolC_1396"/>
<dbReference type="HOGENOM" id="CLU_033332_0_3_6"/>
<dbReference type="UniPathway" id="UPA00030"/>
<dbReference type="UniPathway" id="UPA00032">
    <property type="reaction ID" value="UER00493"/>
</dbReference>
<dbReference type="GO" id="GO:0016020">
    <property type="term" value="C:membrane"/>
    <property type="evidence" value="ECO:0007669"/>
    <property type="project" value="GOC"/>
</dbReference>
<dbReference type="GO" id="GO:0030170">
    <property type="term" value="F:pyridoxal phosphate binding"/>
    <property type="evidence" value="ECO:0007669"/>
    <property type="project" value="TreeGrafter"/>
</dbReference>
<dbReference type="GO" id="GO:0099620">
    <property type="term" value="F:UDP-4-amino-4-deoxy-L-arabinose aminotransferase"/>
    <property type="evidence" value="ECO:0007669"/>
    <property type="project" value="UniProtKB-EC"/>
</dbReference>
<dbReference type="GO" id="GO:0009245">
    <property type="term" value="P:lipid A biosynthetic process"/>
    <property type="evidence" value="ECO:0007669"/>
    <property type="project" value="UniProtKB-KW"/>
</dbReference>
<dbReference type="GO" id="GO:0009103">
    <property type="term" value="P:lipopolysaccharide biosynthetic process"/>
    <property type="evidence" value="ECO:0007669"/>
    <property type="project" value="UniProtKB-UniRule"/>
</dbReference>
<dbReference type="GO" id="GO:0046677">
    <property type="term" value="P:response to antibiotic"/>
    <property type="evidence" value="ECO:0007669"/>
    <property type="project" value="UniProtKB-KW"/>
</dbReference>
<dbReference type="CDD" id="cd00616">
    <property type="entry name" value="AHBA_syn"/>
    <property type="match status" value="1"/>
</dbReference>
<dbReference type="FunFam" id="3.40.640.10:FF:000040">
    <property type="entry name" value="UDP-4-amino-4-deoxy-L-arabinose--oxoglutarate aminotransferase"/>
    <property type="match status" value="1"/>
</dbReference>
<dbReference type="FunFam" id="3.90.1150.10:FF:000030">
    <property type="entry name" value="UDP-4-amino-4-deoxy-L-arabinose--oxoglutarate aminotransferase"/>
    <property type="match status" value="1"/>
</dbReference>
<dbReference type="Gene3D" id="3.90.1150.10">
    <property type="entry name" value="Aspartate Aminotransferase, domain 1"/>
    <property type="match status" value="1"/>
</dbReference>
<dbReference type="Gene3D" id="3.40.640.10">
    <property type="entry name" value="Type I PLP-dependent aspartate aminotransferase-like (Major domain)"/>
    <property type="match status" value="1"/>
</dbReference>
<dbReference type="HAMAP" id="MF_01167">
    <property type="entry name" value="ArnB_transfer"/>
    <property type="match status" value="1"/>
</dbReference>
<dbReference type="InterPro" id="IPR022850">
    <property type="entry name" value="ArnB_NH2Trfase"/>
</dbReference>
<dbReference type="InterPro" id="IPR000653">
    <property type="entry name" value="DegT/StrS_aminotransferase"/>
</dbReference>
<dbReference type="InterPro" id="IPR015424">
    <property type="entry name" value="PyrdxlP-dep_Trfase"/>
</dbReference>
<dbReference type="InterPro" id="IPR015421">
    <property type="entry name" value="PyrdxlP-dep_Trfase_major"/>
</dbReference>
<dbReference type="InterPro" id="IPR015422">
    <property type="entry name" value="PyrdxlP-dep_Trfase_small"/>
</dbReference>
<dbReference type="NCBIfam" id="NF008658">
    <property type="entry name" value="PRK11658.1"/>
    <property type="match status" value="1"/>
</dbReference>
<dbReference type="PANTHER" id="PTHR30244">
    <property type="entry name" value="TRANSAMINASE"/>
    <property type="match status" value="1"/>
</dbReference>
<dbReference type="PANTHER" id="PTHR30244:SF41">
    <property type="entry name" value="UDP-4-AMINO-4-DEOXY-L-ARABINOSE--OXOGLUTARATE AMINOTRANSFERASE"/>
    <property type="match status" value="1"/>
</dbReference>
<dbReference type="Pfam" id="PF01041">
    <property type="entry name" value="DegT_DnrJ_EryC1"/>
    <property type="match status" value="1"/>
</dbReference>
<dbReference type="PIRSF" id="PIRSF000390">
    <property type="entry name" value="PLP_StrS"/>
    <property type="match status" value="1"/>
</dbReference>
<dbReference type="SUPFAM" id="SSF53383">
    <property type="entry name" value="PLP-dependent transferases"/>
    <property type="match status" value="1"/>
</dbReference>
<feature type="chain" id="PRO_1000085382" description="UDP-4-amino-4-deoxy-L-arabinose--oxoglutarate aminotransferase">
    <location>
        <begin position="1"/>
        <end position="379"/>
    </location>
</feature>
<feature type="modified residue" description="N6-(pyridoxal phosphate)lysine" evidence="1">
    <location>
        <position position="182"/>
    </location>
</feature>
<name>ARNB_ECOLC</name>
<evidence type="ECO:0000255" key="1">
    <source>
        <dbReference type="HAMAP-Rule" id="MF_01167"/>
    </source>
</evidence>
<reference key="1">
    <citation type="submission" date="2008-02" db="EMBL/GenBank/DDBJ databases">
        <title>Complete sequence of Escherichia coli C str. ATCC 8739.</title>
        <authorList>
            <person name="Copeland A."/>
            <person name="Lucas S."/>
            <person name="Lapidus A."/>
            <person name="Glavina del Rio T."/>
            <person name="Dalin E."/>
            <person name="Tice H."/>
            <person name="Bruce D."/>
            <person name="Goodwin L."/>
            <person name="Pitluck S."/>
            <person name="Kiss H."/>
            <person name="Brettin T."/>
            <person name="Detter J.C."/>
            <person name="Han C."/>
            <person name="Kuske C.R."/>
            <person name="Schmutz J."/>
            <person name="Larimer F."/>
            <person name="Land M."/>
            <person name="Hauser L."/>
            <person name="Kyrpides N."/>
            <person name="Mikhailova N."/>
            <person name="Ingram L."/>
            <person name="Richardson P."/>
        </authorList>
    </citation>
    <scope>NUCLEOTIDE SEQUENCE [LARGE SCALE GENOMIC DNA]</scope>
    <source>
        <strain>ATCC 8739 / DSM 1576 / NBRC 3972 / NCIMB 8545 / WDCM 00012 / Crooks</strain>
    </source>
</reference>
<keyword id="KW-0032">Aminotransferase</keyword>
<keyword id="KW-0046">Antibiotic resistance</keyword>
<keyword id="KW-0441">Lipid A biosynthesis</keyword>
<keyword id="KW-0444">Lipid biosynthesis</keyword>
<keyword id="KW-0443">Lipid metabolism</keyword>
<keyword id="KW-0448">Lipopolysaccharide biosynthesis</keyword>
<keyword id="KW-0663">Pyridoxal phosphate</keyword>
<keyword id="KW-0808">Transferase</keyword>
<accession>B1IXT4</accession>
<comment type="function">
    <text evidence="1">Catalyzes the conversion of UDP-4-keto-arabinose (UDP-Ara4O) to UDP-4-amino-4-deoxy-L-arabinose (UDP-L-Ara4N). The modified arabinose is attached to lipid A and is required for resistance to polymyxin and cationic antimicrobial peptides.</text>
</comment>
<comment type="catalytic activity">
    <reaction evidence="1">
        <text>UDP-4-amino-4-deoxy-beta-L-arabinose + 2-oxoglutarate = UDP-beta-L-threo-pentopyranos-4-ulose + L-glutamate</text>
        <dbReference type="Rhea" id="RHEA:24710"/>
        <dbReference type="ChEBI" id="CHEBI:16810"/>
        <dbReference type="ChEBI" id="CHEBI:29985"/>
        <dbReference type="ChEBI" id="CHEBI:58708"/>
        <dbReference type="ChEBI" id="CHEBI:58710"/>
        <dbReference type="EC" id="2.6.1.87"/>
    </reaction>
</comment>
<comment type="cofactor">
    <cofactor evidence="1">
        <name>pyridoxal 5'-phosphate</name>
        <dbReference type="ChEBI" id="CHEBI:597326"/>
    </cofactor>
</comment>
<comment type="pathway">
    <text evidence="1">Nucleotide-sugar biosynthesis; UDP-4-deoxy-4-formamido-beta-L-arabinose biosynthesis; UDP-4-deoxy-4-formamido-beta-L-arabinose from UDP-alpha-D-glucuronate: step 2/3.</text>
</comment>
<comment type="pathway">
    <text evidence="1">Bacterial outer membrane biogenesis; lipopolysaccharide biosynthesis.</text>
</comment>
<comment type="subunit">
    <text evidence="1">Homodimer.</text>
</comment>
<comment type="similarity">
    <text evidence="1">Belongs to the DegT/DnrJ/EryC1 family. ArnB subfamily.</text>
</comment>
<organism>
    <name type="scientific">Escherichia coli (strain ATCC 8739 / DSM 1576 / NBRC 3972 / NCIMB 8545 / WDCM 00012 / Crooks)</name>
    <dbReference type="NCBI Taxonomy" id="481805"/>
    <lineage>
        <taxon>Bacteria</taxon>
        <taxon>Pseudomonadati</taxon>
        <taxon>Pseudomonadota</taxon>
        <taxon>Gammaproteobacteria</taxon>
        <taxon>Enterobacterales</taxon>
        <taxon>Enterobacteriaceae</taxon>
        <taxon>Escherichia</taxon>
    </lineage>
</organism>
<protein>
    <recommendedName>
        <fullName evidence="1">UDP-4-amino-4-deoxy-L-arabinose--oxoglutarate aminotransferase</fullName>
        <ecNumber evidence="1">2.6.1.87</ecNumber>
    </recommendedName>
    <alternativeName>
        <fullName evidence="1">UDP-(beta-L-threo-pentapyranosyl-4''-ulose diphosphate) aminotransferase</fullName>
        <shortName evidence="1">UDP-Ara4O aminotransferase</shortName>
    </alternativeName>
    <alternativeName>
        <fullName evidence="1">UDP-4-amino-4-deoxy-L-arabinose aminotransferase</fullName>
    </alternativeName>
</protein>
<proteinExistence type="inferred from homology"/>
<sequence length="379" mass="41670">MSEFLPFSRPAMGVEELAAVKEVLESGWITTGPKNQALEQAFCQLTGNQHAIAVSSATAGMHITLMALEIGKGDEVITPSLTWVSTLNMISLLGATPVMVDVDRDTLMVTPEAIESAITPRTKAIIPVHYAGAPADIDAIRAIGERYGIAVIEDAAHAVGTYYKGRHIGAKGTAIFSFHAIKNITCAEGGLIVTDNENLARQLRMLKFHGLGVDAYDRQTWGRAPQAEVLTPGYKYNLTDINAAIAMTQLAKLEYLNTRRREIALQYQQALAALPFQPLSLPAWPHVHAWHLFIIRVDEQRCGISRNALMEALKERGIGTGLHFRAAHTQKYYRERFPTLSLPNTEWNSERICSLPLFPDMTTADADRVITALQQLAGQ</sequence>
<gene>
    <name evidence="1" type="primary">arnB</name>
    <name type="ordered locus">EcolC_1396</name>
</gene>